<comment type="function">
    <text>Binds to the brush border membrane vesicles of scarab larvae and somehow damages the gut wall to allow the vegetative cells of P.popilliae to enter the hemolymph. Active on M.melolontha.</text>
</comment>
<comment type="developmental stage">
    <text>The crystal protein is produced during sporulation and is accumulated both as an inclusion and as part of the spore coat.</text>
</comment>
<comment type="similarity">
    <text evidence="1">Belongs to the delta endotoxin family.</text>
</comment>
<proteinExistence type="evidence at protein level"/>
<organism>
    <name type="scientific">Paenibacillus popilliae</name>
    <name type="common">Bacillus popilliae</name>
    <dbReference type="NCBI Taxonomy" id="78057"/>
    <lineage>
        <taxon>Bacteria</taxon>
        <taxon>Bacillati</taxon>
        <taxon>Bacillota</taxon>
        <taxon>Bacilli</taxon>
        <taxon>Bacillales</taxon>
        <taxon>Paenibacillaceae</taxon>
        <taxon>Paenibacillus</taxon>
    </lineage>
</organism>
<protein>
    <recommendedName>
        <fullName>Parasporal crystal protein Cry18Aa</fullName>
    </recommendedName>
    <alternativeName>
        <fullName>79 kDa crystal protein</fullName>
    </alternativeName>
    <alternativeName>
        <fullName>Crystaline parasporal protoxin</fullName>
    </alternativeName>
    <alternativeName>
        <fullName>Parasporal delta-endotoxin CryXVIIIA(a)</fullName>
    </alternativeName>
</protein>
<gene>
    <name type="primary">cry18Aa</name>
    <name type="synonym">cryBP1</name>
    <name type="synonym">cryXVIIIA(a)</name>
</gene>
<dbReference type="EMBL" id="X99049">
    <property type="protein sequence ID" value="CAA67506.1"/>
    <property type="molecule type" value="Genomic_DNA"/>
</dbReference>
<dbReference type="SMR" id="Q45358"/>
<dbReference type="GO" id="GO:0005102">
    <property type="term" value="F:signaling receptor binding"/>
    <property type="evidence" value="ECO:0007669"/>
    <property type="project" value="InterPro"/>
</dbReference>
<dbReference type="GO" id="GO:0090729">
    <property type="term" value="F:toxin activity"/>
    <property type="evidence" value="ECO:0007669"/>
    <property type="project" value="UniProtKB-KW"/>
</dbReference>
<dbReference type="GO" id="GO:0030435">
    <property type="term" value="P:sporulation resulting in formation of a cellular spore"/>
    <property type="evidence" value="ECO:0007669"/>
    <property type="project" value="UniProtKB-KW"/>
</dbReference>
<dbReference type="GO" id="GO:0001907">
    <property type="term" value="P:symbiont-mediated killing of host cell"/>
    <property type="evidence" value="ECO:0007669"/>
    <property type="project" value="InterPro"/>
</dbReference>
<dbReference type="Gene3D" id="2.60.120.260">
    <property type="entry name" value="Galactose-binding domain-like"/>
    <property type="match status" value="1"/>
</dbReference>
<dbReference type="Gene3D" id="2.100.10.10">
    <property type="entry name" value="Pesticidal crystal protein, central domain"/>
    <property type="match status" value="2"/>
</dbReference>
<dbReference type="Gene3D" id="1.20.190.10">
    <property type="entry name" value="Pesticidal crystal protein, N-terminal domain"/>
    <property type="match status" value="1"/>
</dbReference>
<dbReference type="InterPro" id="IPR008979">
    <property type="entry name" value="Galactose-bd-like_sf"/>
</dbReference>
<dbReference type="InterPro" id="IPR038979">
    <property type="entry name" value="Pest_crys"/>
</dbReference>
<dbReference type="InterPro" id="IPR005638">
    <property type="entry name" value="Pest_crys_dom-III"/>
</dbReference>
<dbReference type="InterPro" id="IPR005639">
    <property type="entry name" value="Pest_crys_dom_I"/>
</dbReference>
<dbReference type="InterPro" id="IPR036716">
    <property type="entry name" value="Pest_crys_N_sf"/>
</dbReference>
<dbReference type="InterPro" id="IPR015214">
    <property type="entry name" value="Pest_cryst_cen_dom_Cry2A/18"/>
</dbReference>
<dbReference type="InterPro" id="IPR036399">
    <property type="entry name" value="Pest_cryst_cen_dom_sf"/>
</dbReference>
<dbReference type="PANTHER" id="PTHR37003">
    <property type="entry name" value="ENDOTOXIN_N DOMAIN-CONTAINING PROTEIN-RELATED"/>
    <property type="match status" value="1"/>
</dbReference>
<dbReference type="PANTHER" id="PTHR37003:SF2">
    <property type="entry name" value="PESTICIDAL CRYSTAL PROTEIN N-TERMINAL DOMAIN-CONTAINING PROTEIN"/>
    <property type="match status" value="1"/>
</dbReference>
<dbReference type="Pfam" id="PF03944">
    <property type="entry name" value="Endotoxin_C"/>
    <property type="match status" value="1"/>
</dbReference>
<dbReference type="Pfam" id="PF09131">
    <property type="entry name" value="Endotoxin_mid"/>
    <property type="match status" value="1"/>
</dbReference>
<dbReference type="Pfam" id="PF03945">
    <property type="entry name" value="Endotoxin_N"/>
    <property type="match status" value="1"/>
</dbReference>
<dbReference type="SUPFAM" id="SSF51096">
    <property type="entry name" value="delta-Endotoxin (insectocide), middle domain"/>
    <property type="match status" value="1"/>
</dbReference>
<dbReference type="SUPFAM" id="SSF56849">
    <property type="entry name" value="delta-Endotoxin (insectocide), N-terminal domain"/>
    <property type="match status" value="1"/>
</dbReference>
<dbReference type="SUPFAM" id="SSF49785">
    <property type="entry name" value="Galactose-binding domain-like"/>
    <property type="match status" value="1"/>
</dbReference>
<keyword id="KW-0903">Direct protein sequencing</keyword>
<keyword id="KW-0749">Sporulation</keyword>
<keyword id="KW-0800">Toxin</keyword>
<keyword id="KW-0843">Virulence</keyword>
<sequence length="706" mass="79035">MNNNFNGGNNTGNNFTGNTLSNGICTKKNMKGTLSRTAIFSDGISDDLICCLDPIYNNNDNNNDAICDELGLTPIDNNTICSTDFTPINVMRTDPFRKKSTQELTREWTEWKENSPSLFTPAIVGVVTSFLLQSLKKQATSFLLKTLTDLLFPNNSSLTMEEILRATEQYVQERLDTDTANRVSQELVGLKNNLTTFNDQVEDFLQNRVGISPLAIIDSINTMQQLFVNRLPQFQVSGYQVLLLPLFAQAATLHLTFLRDVIINADEWNIPTAQLNTYTRYFKEYIAEYSNYALSTYDDGFRTRFYPRNTLEDMLQFKTFMTLNALDLVSIWSLLKYVNLYVSTSANLYNIGDNKVNEGAYPISYGPFFNSYIQTKSNYVLSGVSGIGARFTYSTVLGRYLHDDLKNIITTYVGGTQGPNIGVQLSTTELDELKKQQQATRDSLVDFQFFTLNCMLPNPITAPYFATSLYESRYSSIGGYLRKDVFKSEDSTCGLGNPGAWTSYPDYYITNISATVQINGENTDTTPLYFKENRPITSTRGVNKVIAVYNRKANIAGTNQNGTMIHQAPPDGTGFTVSPLHPSANTITSYIKENYGNSGDSLHLKGQGYLHYMLSGNGQDRYRLVLRLSGAANQIKLQSPTTSIYAFDTSTNNEGITDNGSKFKDFAFSTPFVIPEQKEIVLYFEGVGSLDLMNLIFLPADDTPLY</sequence>
<evidence type="ECO:0000305" key="1"/>
<accession>Q45358</accession>
<reference key="1">
    <citation type="journal article" date="1997" name="J. Bacteriol.">
        <title>Cloning and analysis of the first cry gene from Bacillus popilliae.</title>
        <authorList>
            <person name="Zhang J."/>
            <person name="Hodgman T.C."/>
            <person name="Krieger L."/>
            <person name="Schnetter W."/>
            <person name="Schairer H.U."/>
        </authorList>
    </citation>
    <scope>NUCLEOTIDE SEQUENCE [GENOMIC DNA]</scope>
    <scope>PARTIAL PROTEIN SEQUENCE</scope>
    <source>
        <strain>H1 / subsp. melolonthae</strain>
    </source>
</reference>
<name>C18AA_PAEPP</name>
<feature type="chain" id="PRO_0000174091" description="Parasporal crystal protein Cry18Aa">
    <location>
        <begin position="1"/>
        <end position="706"/>
    </location>
</feature>
<feature type="sequence conflict" description="In Ref. 1; AA sequence." evidence="1" ref="1">
    <original>T</original>
    <variation>F</variation>
    <location>
        <position position="670"/>
    </location>
</feature>